<organism>
    <name type="scientific">Macrococcus caseolyticus (strain JCSC5402)</name>
    <name type="common">Macrococcoides caseolyticum</name>
    <dbReference type="NCBI Taxonomy" id="458233"/>
    <lineage>
        <taxon>Bacteria</taxon>
        <taxon>Bacillati</taxon>
        <taxon>Bacillota</taxon>
        <taxon>Bacilli</taxon>
        <taxon>Bacillales</taxon>
        <taxon>Staphylococcaceae</taxon>
        <taxon>Macrococcoides</taxon>
    </lineage>
</organism>
<sequence length="353" mass="38416">MSERQKALDTVIKNMEKSFGKGAVMKLGDRTDRNVSTVSSGSITLDSALGVGGYPKGRIIEIYGPESSGKTTVALHAIAEVQRQGGVAAFIDAEHALDPVYAKNLGVDIENLYLSQPDHGEQGLEIAEAFVRSGAVDIIVVDSVAALTPKAEIEGEMGDSHMGLQARLMSQALRKLSGSVSKSNTIAIFINQVREKIGVMFGNPETTPGGRALKFYSSVRLEVRRAEQLKQGQEIVGNRTKIKVVKNKVAPPFKVAEVDIMYGKGISREGEIVDLGAEYEVLQKSGAWYSYDGERIGQGRENIKTYLKENPEVRDEIDQKIRKAMGVGASLEEASAQKEEVPVEDKLFDDELE</sequence>
<proteinExistence type="inferred from homology"/>
<accession>B9EBH1</accession>
<dbReference type="EMBL" id="AP009484">
    <property type="protein sequence ID" value="BAH17582.1"/>
    <property type="molecule type" value="Genomic_DNA"/>
</dbReference>
<dbReference type="RefSeq" id="WP_012656782.1">
    <property type="nucleotide sequence ID" value="NC_011999.1"/>
</dbReference>
<dbReference type="SMR" id="B9EBH1"/>
<dbReference type="STRING" id="458233.MCCL_0875"/>
<dbReference type="GeneID" id="61129215"/>
<dbReference type="KEGG" id="mcl:MCCL_0875"/>
<dbReference type="eggNOG" id="COG0468">
    <property type="taxonomic scope" value="Bacteria"/>
</dbReference>
<dbReference type="HOGENOM" id="CLU_040469_3_2_9"/>
<dbReference type="OrthoDB" id="9776733at2"/>
<dbReference type="Proteomes" id="UP000001383">
    <property type="component" value="Chromosome"/>
</dbReference>
<dbReference type="GO" id="GO:0005829">
    <property type="term" value="C:cytosol"/>
    <property type="evidence" value="ECO:0007669"/>
    <property type="project" value="TreeGrafter"/>
</dbReference>
<dbReference type="GO" id="GO:0005524">
    <property type="term" value="F:ATP binding"/>
    <property type="evidence" value="ECO:0007669"/>
    <property type="project" value="UniProtKB-UniRule"/>
</dbReference>
<dbReference type="GO" id="GO:0016887">
    <property type="term" value="F:ATP hydrolysis activity"/>
    <property type="evidence" value="ECO:0007669"/>
    <property type="project" value="InterPro"/>
</dbReference>
<dbReference type="GO" id="GO:0140664">
    <property type="term" value="F:ATP-dependent DNA damage sensor activity"/>
    <property type="evidence" value="ECO:0007669"/>
    <property type="project" value="InterPro"/>
</dbReference>
<dbReference type="GO" id="GO:0003684">
    <property type="term" value="F:damaged DNA binding"/>
    <property type="evidence" value="ECO:0007669"/>
    <property type="project" value="UniProtKB-UniRule"/>
</dbReference>
<dbReference type="GO" id="GO:0003697">
    <property type="term" value="F:single-stranded DNA binding"/>
    <property type="evidence" value="ECO:0007669"/>
    <property type="project" value="UniProtKB-UniRule"/>
</dbReference>
<dbReference type="GO" id="GO:0006310">
    <property type="term" value="P:DNA recombination"/>
    <property type="evidence" value="ECO:0007669"/>
    <property type="project" value="UniProtKB-UniRule"/>
</dbReference>
<dbReference type="GO" id="GO:0006281">
    <property type="term" value="P:DNA repair"/>
    <property type="evidence" value="ECO:0007669"/>
    <property type="project" value="UniProtKB-UniRule"/>
</dbReference>
<dbReference type="GO" id="GO:0009432">
    <property type="term" value="P:SOS response"/>
    <property type="evidence" value="ECO:0007669"/>
    <property type="project" value="UniProtKB-UniRule"/>
</dbReference>
<dbReference type="CDD" id="cd00983">
    <property type="entry name" value="RecA"/>
    <property type="match status" value="1"/>
</dbReference>
<dbReference type="FunFam" id="3.40.50.300:FF:000087">
    <property type="entry name" value="Recombinase RecA"/>
    <property type="match status" value="1"/>
</dbReference>
<dbReference type="Gene3D" id="3.40.50.300">
    <property type="entry name" value="P-loop containing nucleotide triphosphate hydrolases"/>
    <property type="match status" value="1"/>
</dbReference>
<dbReference type="HAMAP" id="MF_00268">
    <property type="entry name" value="RecA"/>
    <property type="match status" value="1"/>
</dbReference>
<dbReference type="InterPro" id="IPR003593">
    <property type="entry name" value="AAA+_ATPase"/>
</dbReference>
<dbReference type="InterPro" id="IPR013765">
    <property type="entry name" value="DNA_recomb/repair_RecA"/>
</dbReference>
<dbReference type="InterPro" id="IPR020584">
    <property type="entry name" value="DNA_recomb/repair_RecA_CS"/>
</dbReference>
<dbReference type="InterPro" id="IPR027417">
    <property type="entry name" value="P-loop_NTPase"/>
</dbReference>
<dbReference type="InterPro" id="IPR049261">
    <property type="entry name" value="RecA-like_C"/>
</dbReference>
<dbReference type="InterPro" id="IPR049428">
    <property type="entry name" value="RecA-like_N"/>
</dbReference>
<dbReference type="InterPro" id="IPR020588">
    <property type="entry name" value="RecA_ATP-bd"/>
</dbReference>
<dbReference type="InterPro" id="IPR023400">
    <property type="entry name" value="RecA_C_sf"/>
</dbReference>
<dbReference type="InterPro" id="IPR020587">
    <property type="entry name" value="RecA_monomer-monomer_interface"/>
</dbReference>
<dbReference type="NCBIfam" id="TIGR02012">
    <property type="entry name" value="tigrfam_recA"/>
    <property type="match status" value="1"/>
</dbReference>
<dbReference type="PANTHER" id="PTHR45900:SF1">
    <property type="entry name" value="MITOCHONDRIAL DNA REPAIR PROTEIN RECA HOMOLOG-RELATED"/>
    <property type="match status" value="1"/>
</dbReference>
<dbReference type="PANTHER" id="PTHR45900">
    <property type="entry name" value="RECA"/>
    <property type="match status" value="1"/>
</dbReference>
<dbReference type="Pfam" id="PF00154">
    <property type="entry name" value="RecA"/>
    <property type="match status" value="1"/>
</dbReference>
<dbReference type="Pfam" id="PF21096">
    <property type="entry name" value="RecA_C"/>
    <property type="match status" value="1"/>
</dbReference>
<dbReference type="PRINTS" id="PR00142">
    <property type="entry name" value="RECA"/>
</dbReference>
<dbReference type="SMART" id="SM00382">
    <property type="entry name" value="AAA"/>
    <property type="match status" value="1"/>
</dbReference>
<dbReference type="SUPFAM" id="SSF52540">
    <property type="entry name" value="P-loop containing nucleoside triphosphate hydrolases"/>
    <property type="match status" value="1"/>
</dbReference>
<dbReference type="SUPFAM" id="SSF54752">
    <property type="entry name" value="RecA protein, C-terminal domain"/>
    <property type="match status" value="1"/>
</dbReference>
<dbReference type="PROSITE" id="PS00321">
    <property type="entry name" value="RECA_1"/>
    <property type="match status" value="1"/>
</dbReference>
<dbReference type="PROSITE" id="PS50162">
    <property type="entry name" value="RECA_2"/>
    <property type="match status" value="1"/>
</dbReference>
<dbReference type="PROSITE" id="PS50163">
    <property type="entry name" value="RECA_3"/>
    <property type="match status" value="1"/>
</dbReference>
<name>RECA_MACCJ</name>
<reference key="1">
    <citation type="journal article" date="2009" name="J. Bacteriol.">
        <title>Complete genome sequence of Macrococcus caseolyticus strain JCSCS5402, reflecting the ancestral genome of the human-pathogenic staphylococci.</title>
        <authorList>
            <person name="Baba T."/>
            <person name="Kuwahara-Arai K."/>
            <person name="Uchiyama I."/>
            <person name="Takeuchi F."/>
            <person name="Ito T."/>
            <person name="Hiramatsu K."/>
        </authorList>
    </citation>
    <scope>NUCLEOTIDE SEQUENCE [LARGE SCALE GENOMIC DNA]</scope>
    <source>
        <strain>JCSC5402</strain>
    </source>
</reference>
<gene>
    <name evidence="1" type="primary">recA</name>
    <name type="ordered locus">MCCL_0875</name>
</gene>
<keyword id="KW-0067">ATP-binding</keyword>
<keyword id="KW-0963">Cytoplasm</keyword>
<keyword id="KW-0227">DNA damage</keyword>
<keyword id="KW-0233">DNA recombination</keyword>
<keyword id="KW-0234">DNA repair</keyword>
<keyword id="KW-0238">DNA-binding</keyword>
<keyword id="KW-0547">Nucleotide-binding</keyword>
<keyword id="KW-1185">Reference proteome</keyword>
<keyword id="KW-0742">SOS response</keyword>
<comment type="function">
    <text evidence="1">Can catalyze the hydrolysis of ATP in the presence of single-stranded DNA, the ATP-dependent uptake of single-stranded DNA by duplex DNA, and the ATP-dependent hybridization of homologous single-stranded DNAs. It interacts with LexA causing its activation and leading to its autocatalytic cleavage.</text>
</comment>
<comment type="subcellular location">
    <subcellularLocation>
        <location evidence="1">Cytoplasm</location>
    </subcellularLocation>
</comment>
<comment type="similarity">
    <text evidence="1">Belongs to the RecA family.</text>
</comment>
<evidence type="ECO:0000255" key="1">
    <source>
        <dbReference type="HAMAP-Rule" id="MF_00268"/>
    </source>
</evidence>
<evidence type="ECO:0000256" key="2">
    <source>
        <dbReference type="SAM" id="MobiDB-lite"/>
    </source>
</evidence>
<protein>
    <recommendedName>
        <fullName evidence="1">Protein RecA</fullName>
    </recommendedName>
    <alternativeName>
        <fullName evidence="1">Recombinase A</fullName>
    </alternativeName>
</protein>
<feature type="chain" id="PRO_1000193317" description="Protein RecA">
    <location>
        <begin position="1"/>
        <end position="353"/>
    </location>
</feature>
<feature type="region of interest" description="Disordered" evidence="2">
    <location>
        <begin position="331"/>
        <end position="353"/>
    </location>
</feature>
<feature type="compositionally biased region" description="Basic and acidic residues" evidence="2">
    <location>
        <begin position="335"/>
        <end position="346"/>
    </location>
</feature>
<feature type="binding site" evidence="1">
    <location>
        <begin position="64"/>
        <end position="71"/>
    </location>
    <ligand>
        <name>ATP</name>
        <dbReference type="ChEBI" id="CHEBI:30616"/>
    </ligand>
</feature>